<evidence type="ECO:0000255" key="1">
    <source>
        <dbReference type="HAMAP-Rule" id="MF_01021"/>
    </source>
</evidence>
<protein>
    <recommendedName>
        <fullName evidence="1">Phosphoribosyl-AMP cyclohydrolase</fullName>
        <shortName evidence="1">PRA-CH</shortName>
        <ecNumber evidence="1">3.5.4.19</ecNumber>
    </recommendedName>
</protein>
<comment type="function">
    <text evidence="1">Catalyzes the hydrolysis of the adenine ring of phosphoribosyl-AMP.</text>
</comment>
<comment type="catalytic activity">
    <reaction evidence="1">
        <text>1-(5-phospho-beta-D-ribosyl)-5'-AMP + H2O = 1-(5-phospho-beta-D-ribosyl)-5-[(5-phospho-beta-D-ribosylamino)methylideneamino]imidazole-4-carboxamide</text>
        <dbReference type="Rhea" id="RHEA:20049"/>
        <dbReference type="ChEBI" id="CHEBI:15377"/>
        <dbReference type="ChEBI" id="CHEBI:58435"/>
        <dbReference type="ChEBI" id="CHEBI:59457"/>
        <dbReference type="EC" id="3.5.4.19"/>
    </reaction>
</comment>
<comment type="cofactor">
    <cofactor evidence="1">
        <name>Mg(2+)</name>
        <dbReference type="ChEBI" id="CHEBI:18420"/>
    </cofactor>
    <text evidence="1">Binds 1 Mg(2+) ion per subunit.</text>
</comment>
<comment type="cofactor">
    <cofactor evidence="1">
        <name>Zn(2+)</name>
        <dbReference type="ChEBI" id="CHEBI:29105"/>
    </cofactor>
    <text evidence="1">Binds 1 zinc ion per subunit.</text>
</comment>
<comment type="pathway">
    <text evidence="1">Amino-acid biosynthesis; L-histidine biosynthesis; L-histidine from 5-phospho-alpha-D-ribose 1-diphosphate: step 3/9.</text>
</comment>
<comment type="subunit">
    <text evidence="1">Homodimer.</text>
</comment>
<comment type="subcellular location">
    <subcellularLocation>
        <location evidence="1">Cytoplasm</location>
    </subcellularLocation>
</comment>
<comment type="similarity">
    <text evidence="1">Belongs to the PRA-CH family.</text>
</comment>
<organism>
    <name type="scientific">Jannaschia sp. (strain CCS1)</name>
    <dbReference type="NCBI Taxonomy" id="290400"/>
    <lineage>
        <taxon>Bacteria</taxon>
        <taxon>Pseudomonadati</taxon>
        <taxon>Pseudomonadota</taxon>
        <taxon>Alphaproteobacteria</taxon>
        <taxon>Rhodobacterales</taxon>
        <taxon>Roseobacteraceae</taxon>
        <taxon>Jannaschia</taxon>
    </lineage>
</organism>
<proteinExistence type="inferred from homology"/>
<name>HIS3_JANSC</name>
<reference key="1">
    <citation type="submission" date="2006-02" db="EMBL/GenBank/DDBJ databases">
        <title>Complete sequence of chromosome of Jannaschia sp. CCS1.</title>
        <authorList>
            <consortium name="US DOE Joint Genome Institute"/>
            <person name="Copeland A."/>
            <person name="Lucas S."/>
            <person name="Lapidus A."/>
            <person name="Barry K."/>
            <person name="Detter J.C."/>
            <person name="Glavina del Rio T."/>
            <person name="Hammon N."/>
            <person name="Israni S."/>
            <person name="Pitluck S."/>
            <person name="Brettin T."/>
            <person name="Bruce D."/>
            <person name="Han C."/>
            <person name="Tapia R."/>
            <person name="Gilna P."/>
            <person name="Chertkov O."/>
            <person name="Saunders E."/>
            <person name="Schmutz J."/>
            <person name="Larimer F."/>
            <person name="Land M."/>
            <person name="Kyrpides N."/>
            <person name="Lykidis A."/>
            <person name="Moran M.A."/>
            <person name="Belas R."/>
            <person name="Ye W."/>
            <person name="Buchan A."/>
            <person name="Gonzalez J.M."/>
            <person name="Schell M.A."/>
            <person name="Richardson P."/>
        </authorList>
    </citation>
    <scope>NUCLEOTIDE SEQUENCE [LARGE SCALE GENOMIC DNA]</scope>
    <source>
        <strain>CCS1</strain>
    </source>
</reference>
<gene>
    <name evidence="1" type="primary">hisI</name>
    <name type="ordered locus">Jann_2501</name>
</gene>
<dbReference type="EC" id="3.5.4.19" evidence="1"/>
<dbReference type="EMBL" id="CP000264">
    <property type="protein sequence ID" value="ABD55418.1"/>
    <property type="molecule type" value="Genomic_DNA"/>
</dbReference>
<dbReference type="RefSeq" id="WP_011455622.1">
    <property type="nucleotide sequence ID" value="NC_007802.1"/>
</dbReference>
<dbReference type="SMR" id="Q28PE4"/>
<dbReference type="STRING" id="290400.Jann_2501"/>
<dbReference type="KEGG" id="jan:Jann_2501"/>
<dbReference type="eggNOG" id="COG0139">
    <property type="taxonomic scope" value="Bacteria"/>
</dbReference>
<dbReference type="HOGENOM" id="CLU_048577_5_2_5"/>
<dbReference type="OrthoDB" id="9795769at2"/>
<dbReference type="UniPathway" id="UPA00031">
    <property type="reaction ID" value="UER00008"/>
</dbReference>
<dbReference type="Proteomes" id="UP000008326">
    <property type="component" value="Chromosome"/>
</dbReference>
<dbReference type="GO" id="GO:0005737">
    <property type="term" value="C:cytoplasm"/>
    <property type="evidence" value="ECO:0007669"/>
    <property type="project" value="UniProtKB-SubCell"/>
</dbReference>
<dbReference type="GO" id="GO:0000287">
    <property type="term" value="F:magnesium ion binding"/>
    <property type="evidence" value="ECO:0007669"/>
    <property type="project" value="UniProtKB-UniRule"/>
</dbReference>
<dbReference type="GO" id="GO:0004635">
    <property type="term" value="F:phosphoribosyl-AMP cyclohydrolase activity"/>
    <property type="evidence" value="ECO:0007669"/>
    <property type="project" value="UniProtKB-UniRule"/>
</dbReference>
<dbReference type="GO" id="GO:0008270">
    <property type="term" value="F:zinc ion binding"/>
    <property type="evidence" value="ECO:0007669"/>
    <property type="project" value="UniProtKB-UniRule"/>
</dbReference>
<dbReference type="GO" id="GO:0000105">
    <property type="term" value="P:L-histidine biosynthetic process"/>
    <property type="evidence" value="ECO:0007669"/>
    <property type="project" value="UniProtKB-UniRule"/>
</dbReference>
<dbReference type="FunFam" id="3.10.20.810:FF:000001">
    <property type="entry name" value="Histidine biosynthesis bifunctional protein HisIE"/>
    <property type="match status" value="1"/>
</dbReference>
<dbReference type="Gene3D" id="3.10.20.810">
    <property type="entry name" value="Phosphoribosyl-AMP cyclohydrolase"/>
    <property type="match status" value="1"/>
</dbReference>
<dbReference type="HAMAP" id="MF_01021">
    <property type="entry name" value="HisI"/>
    <property type="match status" value="1"/>
</dbReference>
<dbReference type="InterPro" id="IPR026660">
    <property type="entry name" value="PRA-CH"/>
</dbReference>
<dbReference type="InterPro" id="IPR002496">
    <property type="entry name" value="PRib_AMP_CycHydrolase_dom"/>
</dbReference>
<dbReference type="InterPro" id="IPR038019">
    <property type="entry name" value="PRib_AMP_CycHydrolase_sf"/>
</dbReference>
<dbReference type="NCBIfam" id="NF000768">
    <property type="entry name" value="PRK00051.1"/>
    <property type="match status" value="1"/>
</dbReference>
<dbReference type="PANTHER" id="PTHR42945">
    <property type="entry name" value="HISTIDINE BIOSYNTHESIS BIFUNCTIONAL PROTEIN"/>
    <property type="match status" value="1"/>
</dbReference>
<dbReference type="PANTHER" id="PTHR42945:SF1">
    <property type="entry name" value="HISTIDINE BIOSYNTHESIS BIFUNCTIONAL PROTEIN HIS7"/>
    <property type="match status" value="1"/>
</dbReference>
<dbReference type="Pfam" id="PF01502">
    <property type="entry name" value="PRA-CH"/>
    <property type="match status" value="1"/>
</dbReference>
<dbReference type="SUPFAM" id="SSF141734">
    <property type="entry name" value="HisI-like"/>
    <property type="match status" value="1"/>
</dbReference>
<accession>Q28PE4</accession>
<keyword id="KW-0028">Amino-acid biosynthesis</keyword>
<keyword id="KW-0963">Cytoplasm</keyword>
<keyword id="KW-0368">Histidine biosynthesis</keyword>
<keyword id="KW-0378">Hydrolase</keyword>
<keyword id="KW-0460">Magnesium</keyword>
<keyword id="KW-0479">Metal-binding</keyword>
<keyword id="KW-1185">Reference proteome</keyword>
<keyword id="KW-0862">Zinc</keyword>
<sequence>MTQFDPATLRYDVNGLIPCIAQQEGTGEVLMMAWMNADSVARTLESGRVTYWSRSRQAFWVKGETSGHVQELVDLRVDCDRDCLLAVVRQTGPACHTNRRVCFYTSVTSGEEVELMAPE</sequence>
<feature type="chain" id="PRO_0000319692" description="Phosphoribosyl-AMP cyclohydrolase">
    <location>
        <begin position="1"/>
        <end position="119"/>
    </location>
</feature>
<feature type="binding site" evidence="1">
    <location>
        <position position="78"/>
    </location>
    <ligand>
        <name>Mg(2+)</name>
        <dbReference type="ChEBI" id="CHEBI:18420"/>
    </ligand>
</feature>
<feature type="binding site" evidence="1">
    <location>
        <position position="79"/>
    </location>
    <ligand>
        <name>Zn(2+)</name>
        <dbReference type="ChEBI" id="CHEBI:29105"/>
        <note>ligand shared between dimeric partners</note>
    </ligand>
</feature>
<feature type="binding site" evidence="1">
    <location>
        <position position="80"/>
    </location>
    <ligand>
        <name>Mg(2+)</name>
        <dbReference type="ChEBI" id="CHEBI:18420"/>
    </ligand>
</feature>
<feature type="binding site" evidence="1">
    <location>
        <position position="82"/>
    </location>
    <ligand>
        <name>Mg(2+)</name>
        <dbReference type="ChEBI" id="CHEBI:18420"/>
    </ligand>
</feature>
<feature type="binding site" evidence="1">
    <location>
        <position position="95"/>
    </location>
    <ligand>
        <name>Zn(2+)</name>
        <dbReference type="ChEBI" id="CHEBI:29105"/>
        <note>ligand shared between dimeric partners</note>
    </ligand>
</feature>
<feature type="binding site" evidence="1">
    <location>
        <position position="102"/>
    </location>
    <ligand>
        <name>Zn(2+)</name>
        <dbReference type="ChEBI" id="CHEBI:29105"/>
        <note>ligand shared between dimeric partners</note>
    </ligand>
</feature>